<dbReference type="EC" id="6.1.1.11" evidence="1"/>
<dbReference type="EMBL" id="CP000728">
    <property type="protein sequence ID" value="ABS40498.1"/>
    <property type="molecule type" value="Genomic_DNA"/>
</dbReference>
<dbReference type="RefSeq" id="WP_011987166.1">
    <property type="nucleotide sequence ID" value="NC_009699.1"/>
</dbReference>
<dbReference type="SMR" id="A7G9C5"/>
<dbReference type="KEGG" id="cbf:CLI_0026"/>
<dbReference type="HOGENOM" id="CLU_023797_1_1_9"/>
<dbReference type="UniPathway" id="UPA00906">
    <property type="reaction ID" value="UER00895"/>
</dbReference>
<dbReference type="Proteomes" id="UP000002410">
    <property type="component" value="Chromosome"/>
</dbReference>
<dbReference type="GO" id="GO:0005737">
    <property type="term" value="C:cytoplasm"/>
    <property type="evidence" value="ECO:0007669"/>
    <property type="project" value="UniProtKB-SubCell"/>
</dbReference>
<dbReference type="GO" id="GO:0005524">
    <property type="term" value="F:ATP binding"/>
    <property type="evidence" value="ECO:0007669"/>
    <property type="project" value="UniProtKB-UniRule"/>
</dbReference>
<dbReference type="GO" id="GO:0140096">
    <property type="term" value="F:catalytic activity, acting on a protein"/>
    <property type="evidence" value="ECO:0007669"/>
    <property type="project" value="UniProtKB-ARBA"/>
</dbReference>
<dbReference type="GO" id="GO:0004828">
    <property type="term" value="F:serine-tRNA ligase activity"/>
    <property type="evidence" value="ECO:0007669"/>
    <property type="project" value="UniProtKB-UniRule"/>
</dbReference>
<dbReference type="GO" id="GO:0016740">
    <property type="term" value="F:transferase activity"/>
    <property type="evidence" value="ECO:0007669"/>
    <property type="project" value="UniProtKB-ARBA"/>
</dbReference>
<dbReference type="GO" id="GO:0016260">
    <property type="term" value="P:selenocysteine biosynthetic process"/>
    <property type="evidence" value="ECO:0007669"/>
    <property type="project" value="UniProtKB-UniRule"/>
</dbReference>
<dbReference type="GO" id="GO:0006434">
    <property type="term" value="P:seryl-tRNA aminoacylation"/>
    <property type="evidence" value="ECO:0007669"/>
    <property type="project" value="UniProtKB-UniRule"/>
</dbReference>
<dbReference type="CDD" id="cd00770">
    <property type="entry name" value="SerRS_core"/>
    <property type="match status" value="1"/>
</dbReference>
<dbReference type="Gene3D" id="3.30.930.10">
    <property type="entry name" value="Bira Bifunctional Protein, Domain 2"/>
    <property type="match status" value="1"/>
</dbReference>
<dbReference type="Gene3D" id="1.10.287.40">
    <property type="entry name" value="Serine-tRNA synthetase, tRNA binding domain"/>
    <property type="match status" value="1"/>
</dbReference>
<dbReference type="HAMAP" id="MF_00176">
    <property type="entry name" value="Ser_tRNA_synth_type1"/>
    <property type="match status" value="1"/>
</dbReference>
<dbReference type="InterPro" id="IPR002314">
    <property type="entry name" value="aa-tRNA-synt_IIb"/>
</dbReference>
<dbReference type="InterPro" id="IPR006195">
    <property type="entry name" value="aa-tRNA-synth_II"/>
</dbReference>
<dbReference type="InterPro" id="IPR045864">
    <property type="entry name" value="aa-tRNA-synth_II/BPL/LPL"/>
</dbReference>
<dbReference type="InterPro" id="IPR002317">
    <property type="entry name" value="Ser-tRNA-ligase_type_1"/>
</dbReference>
<dbReference type="InterPro" id="IPR015866">
    <property type="entry name" value="Ser-tRNA-synth_1_N"/>
</dbReference>
<dbReference type="InterPro" id="IPR042103">
    <property type="entry name" value="SerRS_1_N_sf"/>
</dbReference>
<dbReference type="InterPro" id="IPR033729">
    <property type="entry name" value="SerRS_core"/>
</dbReference>
<dbReference type="InterPro" id="IPR010978">
    <property type="entry name" value="tRNA-bd_arm"/>
</dbReference>
<dbReference type="NCBIfam" id="TIGR00414">
    <property type="entry name" value="serS"/>
    <property type="match status" value="1"/>
</dbReference>
<dbReference type="PANTHER" id="PTHR43697:SF1">
    <property type="entry name" value="SERINE--TRNA LIGASE"/>
    <property type="match status" value="1"/>
</dbReference>
<dbReference type="PANTHER" id="PTHR43697">
    <property type="entry name" value="SERYL-TRNA SYNTHETASE"/>
    <property type="match status" value="1"/>
</dbReference>
<dbReference type="Pfam" id="PF02403">
    <property type="entry name" value="Seryl_tRNA_N"/>
    <property type="match status" value="1"/>
</dbReference>
<dbReference type="Pfam" id="PF00587">
    <property type="entry name" value="tRNA-synt_2b"/>
    <property type="match status" value="1"/>
</dbReference>
<dbReference type="PIRSF" id="PIRSF001529">
    <property type="entry name" value="Ser-tRNA-synth_IIa"/>
    <property type="match status" value="1"/>
</dbReference>
<dbReference type="PRINTS" id="PR00981">
    <property type="entry name" value="TRNASYNTHSER"/>
</dbReference>
<dbReference type="SUPFAM" id="SSF55681">
    <property type="entry name" value="Class II aaRS and biotin synthetases"/>
    <property type="match status" value="1"/>
</dbReference>
<dbReference type="SUPFAM" id="SSF46589">
    <property type="entry name" value="tRNA-binding arm"/>
    <property type="match status" value="1"/>
</dbReference>
<dbReference type="PROSITE" id="PS50862">
    <property type="entry name" value="AA_TRNA_LIGASE_II"/>
    <property type="match status" value="1"/>
</dbReference>
<feature type="chain" id="PRO_1000019658" description="Serine--tRNA ligase">
    <location>
        <begin position="1"/>
        <end position="426"/>
    </location>
</feature>
<feature type="binding site" evidence="1">
    <location>
        <begin position="233"/>
        <end position="235"/>
    </location>
    <ligand>
        <name>L-serine</name>
        <dbReference type="ChEBI" id="CHEBI:33384"/>
    </ligand>
</feature>
<feature type="binding site" evidence="1">
    <location>
        <begin position="264"/>
        <end position="266"/>
    </location>
    <ligand>
        <name>ATP</name>
        <dbReference type="ChEBI" id="CHEBI:30616"/>
    </ligand>
</feature>
<feature type="binding site" evidence="1">
    <location>
        <position position="287"/>
    </location>
    <ligand>
        <name>L-serine</name>
        <dbReference type="ChEBI" id="CHEBI:33384"/>
    </ligand>
</feature>
<feature type="binding site" evidence="1">
    <location>
        <begin position="351"/>
        <end position="354"/>
    </location>
    <ligand>
        <name>ATP</name>
        <dbReference type="ChEBI" id="CHEBI:30616"/>
    </ligand>
</feature>
<feature type="binding site" evidence="1">
    <location>
        <position position="387"/>
    </location>
    <ligand>
        <name>L-serine</name>
        <dbReference type="ChEBI" id="CHEBI:33384"/>
    </ligand>
</feature>
<protein>
    <recommendedName>
        <fullName evidence="1">Serine--tRNA ligase</fullName>
        <ecNumber evidence="1">6.1.1.11</ecNumber>
    </recommendedName>
    <alternativeName>
        <fullName evidence="1">Seryl-tRNA synthetase</fullName>
        <shortName evidence="1">SerRS</shortName>
    </alternativeName>
    <alternativeName>
        <fullName evidence="1">Seryl-tRNA(Ser/Sec) synthetase</fullName>
    </alternativeName>
</protein>
<gene>
    <name evidence="1" type="primary">serS</name>
    <name type="ordered locus">CLI_0026</name>
</gene>
<keyword id="KW-0030">Aminoacyl-tRNA synthetase</keyword>
<keyword id="KW-0067">ATP-binding</keyword>
<keyword id="KW-0963">Cytoplasm</keyword>
<keyword id="KW-0436">Ligase</keyword>
<keyword id="KW-0547">Nucleotide-binding</keyword>
<keyword id="KW-0648">Protein biosynthesis</keyword>
<comment type="function">
    <text evidence="1">Catalyzes the attachment of serine to tRNA(Ser). Is also able to aminoacylate tRNA(Sec) with serine, to form the misacylated tRNA L-seryl-tRNA(Sec), which will be further converted into selenocysteinyl-tRNA(Sec).</text>
</comment>
<comment type="catalytic activity">
    <reaction evidence="1">
        <text>tRNA(Ser) + L-serine + ATP = L-seryl-tRNA(Ser) + AMP + diphosphate + H(+)</text>
        <dbReference type="Rhea" id="RHEA:12292"/>
        <dbReference type="Rhea" id="RHEA-COMP:9669"/>
        <dbReference type="Rhea" id="RHEA-COMP:9703"/>
        <dbReference type="ChEBI" id="CHEBI:15378"/>
        <dbReference type="ChEBI" id="CHEBI:30616"/>
        <dbReference type="ChEBI" id="CHEBI:33019"/>
        <dbReference type="ChEBI" id="CHEBI:33384"/>
        <dbReference type="ChEBI" id="CHEBI:78442"/>
        <dbReference type="ChEBI" id="CHEBI:78533"/>
        <dbReference type="ChEBI" id="CHEBI:456215"/>
        <dbReference type="EC" id="6.1.1.11"/>
    </reaction>
</comment>
<comment type="catalytic activity">
    <reaction evidence="1">
        <text>tRNA(Sec) + L-serine + ATP = L-seryl-tRNA(Sec) + AMP + diphosphate + H(+)</text>
        <dbReference type="Rhea" id="RHEA:42580"/>
        <dbReference type="Rhea" id="RHEA-COMP:9742"/>
        <dbReference type="Rhea" id="RHEA-COMP:10128"/>
        <dbReference type="ChEBI" id="CHEBI:15378"/>
        <dbReference type="ChEBI" id="CHEBI:30616"/>
        <dbReference type="ChEBI" id="CHEBI:33019"/>
        <dbReference type="ChEBI" id="CHEBI:33384"/>
        <dbReference type="ChEBI" id="CHEBI:78442"/>
        <dbReference type="ChEBI" id="CHEBI:78533"/>
        <dbReference type="ChEBI" id="CHEBI:456215"/>
        <dbReference type="EC" id="6.1.1.11"/>
    </reaction>
</comment>
<comment type="pathway">
    <text evidence="1">Aminoacyl-tRNA biosynthesis; selenocysteinyl-tRNA(Sec) biosynthesis; L-seryl-tRNA(Sec) from L-serine and tRNA(Sec): step 1/1.</text>
</comment>
<comment type="subunit">
    <text evidence="1">Homodimer. The tRNA molecule binds across the dimer.</text>
</comment>
<comment type="subcellular location">
    <subcellularLocation>
        <location evidence="1">Cytoplasm</location>
    </subcellularLocation>
</comment>
<comment type="domain">
    <text evidence="1">Consists of two distinct domains, a catalytic core and a N-terminal extension that is involved in tRNA binding.</text>
</comment>
<comment type="similarity">
    <text evidence="1">Belongs to the class-II aminoacyl-tRNA synthetase family. Type-1 seryl-tRNA synthetase subfamily.</text>
</comment>
<proteinExistence type="inferred from homology"/>
<name>SYS_CLOBL</name>
<evidence type="ECO:0000255" key="1">
    <source>
        <dbReference type="HAMAP-Rule" id="MF_00176"/>
    </source>
</evidence>
<reference key="1">
    <citation type="submission" date="2007-06" db="EMBL/GenBank/DDBJ databases">
        <authorList>
            <person name="Brinkac L.M."/>
            <person name="Daugherty S."/>
            <person name="Dodson R.J."/>
            <person name="Madupu R."/>
            <person name="Brown J.L."/>
            <person name="Bruce D."/>
            <person name="Detter C."/>
            <person name="Munk C."/>
            <person name="Smith L.A."/>
            <person name="Smith T.J."/>
            <person name="White O."/>
            <person name="Brettin T.S."/>
        </authorList>
    </citation>
    <scope>NUCLEOTIDE SEQUENCE [LARGE SCALE GENOMIC DNA]</scope>
    <source>
        <strain>Langeland / NCTC 10281 / Type F</strain>
    </source>
</reference>
<sequence>MLDLKRIRNNSNEIKEALNNRGEKFDVTVIDEVLKLDEERRNILAKVEVLKSKRNQVSSEVPKLKKEGKDVSNIVAEMKNLSEEIKGFDATLAKIDEKIQYIMLRIPNIPNPQVPDGETDEDNIEIRNWLEPTKFYFEPKAHWDIGTNLNILDFERAGKVTGSRFTFYKGLGARLERAVISYFLDTHTEKHGYTEILPPYMVNRTSMIGTGQLPKFEEDAFKISEDDYFLIPTAEVPVTNLYRDEILKGDELPLKHVAYSACFRSEAGSAGRDTRGLVRQHQFNKVELVKFTKPEQSYEELEKLTNDAETVLKELGIPYRVVRICKGDLGFTAALKYDLEVWMPSYNRYVEISSCSNFEDFQARRANIRYKEDAKAKPQYVHTLNGSGVAIGRTVAAILENYQSEDGSVTIPEVLRPYMGGREVIK</sequence>
<accession>A7G9C5</accession>
<organism>
    <name type="scientific">Clostridium botulinum (strain Langeland / NCTC 10281 / Type F)</name>
    <dbReference type="NCBI Taxonomy" id="441772"/>
    <lineage>
        <taxon>Bacteria</taxon>
        <taxon>Bacillati</taxon>
        <taxon>Bacillota</taxon>
        <taxon>Clostridia</taxon>
        <taxon>Eubacteriales</taxon>
        <taxon>Clostridiaceae</taxon>
        <taxon>Clostridium</taxon>
    </lineage>
</organism>